<evidence type="ECO:0000250" key="1"/>
<evidence type="ECO:0000255" key="2">
    <source>
        <dbReference type="PROSITE-ProRule" id="PRU00303"/>
    </source>
</evidence>
<accession>C6EH62</accession>
<accession>C5W9B2</accession>
<gene>
    <name type="primary">nlpI</name>
    <name type="ordered locus">B21_02981</name>
    <name type="ordered locus">ECBD_0577</name>
    <name type="ordered locus">ECD_03030</name>
</gene>
<organism>
    <name type="scientific">Escherichia coli (strain B / BL21-DE3)</name>
    <dbReference type="NCBI Taxonomy" id="469008"/>
    <lineage>
        <taxon>Bacteria</taxon>
        <taxon>Pseudomonadati</taxon>
        <taxon>Pseudomonadota</taxon>
        <taxon>Gammaproteobacteria</taxon>
        <taxon>Enterobacterales</taxon>
        <taxon>Enterobacteriaceae</taxon>
        <taxon>Escherichia</taxon>
    </lineage>
</organism>
<name>NLPI_ECOBD</name>
<feature type="signal peptide" evidence="2">
    <location>
        <begin position="1"/>
        <end position="18"/>
    </location>
</feature>
<feature type="chain" id="PRO_0000413472" description="Lipoprotein NlpI">
    <location>
        <begin position="19"/>
        <end position="294"/>
    </location>
</feature>
<feature type="repeat" description="TPR 1">
    <location>
        <begin position="62"/>
        <end position="95"/>
    </location>
</feature>
<feature type="repeat" description="TPR 2">
    <location>
        <begin position="96"/>
        <end position="129"/>
    </location>
</feature>
<feature type="repeat" description="TPR 3">
    <location>
        <begin position="234"/>
        <end position="267"/>
    </location>
</feature>
<feature type="lipid moiety-binding region" description="N-palmitoyl cysteine" evidence="2">
    <location>
        <position position="19"/>
    </location>
</feature>
<feature type="lipid moiety-binding region" description="S-diacylglycerol cysteine" evidence="2">
    <location>
        <position position="19"/>
    </location>
</feature>
<reference key="1">
    <citation type="submission" date="2009-06" db="EMBL/GenBank/DDBJ databases">
        <title>Sequencing and gene expression analysis of Escherichia coli BL21.</title>
        <authorList>
            <person name="Leparc G."/>
            <person name="Striedner G."/>
            <person name="Bayer K."/>
            <person name="Kreil D."/>
            <person name="Krempl P.M."/>
        </authorList>
    </citation>
    <scope>NUCLEOTIDE SEQUENCE [LARGE SCALE GENOMIC DNA]</scope>
    <source>
        <strain>B / BL21-DE3</strain>
    </source>
</reference>
<reference key="2">
    <citation type="submission" date="2009-07" db="EMBL/GenBank/DDBJ databases">
        <title>Complete sequence of Escherichia coli BL21(DE3).</title>
        <authorList>
            <person name="Lucas S."/>
            <person name="Copeland A."/>
            <person name="Lapidus A."/>
            <person name="Glavina del Rio T."/>
            <person name="Dalin E."/>
            <person name="Tice H."/>
            <person name="Bruce D."/>
            <person name="Goodwin L."/>
            <person name="Pitluck S."/>
            <person name="LaButti K.M."/>
            <person name="Clum A."/>
            <person name="Larimer F."/>
            <person name="Land M."/>
            <person name="Hauser L."/>
            <person name="Kyrpides N."/>
            <person name="Anderson I."/>
            <person name="Sorek R."/>
            <person name="Rubin E."/>
        </authorList>
    </citation>
    <scope>NUCLEOTIDE SEQUENCE [LARGE SCALE GENOMIC DNA]</scope>
    <source>
        <strain>B / BL21-DE3</strain>
    </source>
</reference>
<reference key="3">
    <citation type="journal article" date="2009" name="J. Mol. Biol.">
        <title>Genome sequences of Escherichia coli B strains REL606 and BL21(DE3).</title>
        <authorList>
            <person name="Jeong H."/>
            <person name="Barbe V."/>
            <person name="Lee C.H."/>
            <person name="Vallenet D."/>
            <person name="Yu D.S."/>
            <person name="Choi S.H."/>
            <person name="Couloux A."/>
            <person name="Lee S.W."/>
            <person name="Yoon S.H."/>
            <person name="Cattolico L."/>
            <person name="Hur C.G."/>
            <person name="Park H.S."/>
            <person name="Segurens B."/>
            <person name="Kim S.C."/>
            <person name="Oh T.K."/>
            <person name="Lenski R.E."/>
            <person name="Studier F.W."/>
            <person name="Daegelen P."/>
            <person name="Kim J.F."/>
        </authorList>
    </citation>
    <scope>NUCLEOTIDE SEQUENCE [LARGE SCALE GENOMIC DNA]</scope>
    <source>
        <strain>B / BL21-DE3</strain>
    </source>
</reference>
<sequence length="294" mass="33621">MKPFLRWCFVATALTLAGCSNTSWRKSEVLAVPLQPTLQQEVILARMEQILASRALTDDERAQLLYERGVLYDSLGLRALARNDFSQALAIRPDMPEVFNYLGIYLTQAGNFDAAYEAFDSVLELDPTYNYAHLNRGIALYYGGRDKLAQDDLLAFYQDDPNDPFRSLWLYLAEQKLDEKQAKEVLKQHFEKSDKEQWGWNIVEFYLGNISEQTLMERLKADATDNTSLAEHLSETNFYLGKYYLSLGDLDSATALFKLAVANNVHNFVEHRYALLELSLLGQDQDDLAESDQQ</sequence>
<proteinExistence type="inferred from homology"/>
<keyword id="KW-0131">Cell cycle</keyword>
<keyword id="KW-0132">Cell division</keyword>
<keyword id="KW-1003">Cell membrane</keyword>
<keyword id="KW-0449">Lipoprotein</keyword>
<keyword id="KW-0472">Membrane</keyword>
<keyword id="KW-0564">Palmitate</keyword>
<keyword id="KW-0677">Repeat</keyword>
<keyword id="KW-0732">Signal</keyword>
<keyword id="KW-0802">TPR repeat</keyword>
<comment type="function">
    <text evidence="1">May be involved in cell division. May play a role in bacterial septation or regulation of cell wall degradation during cell division (By similarity).</text>
</comment>
<comment type="subunit">
    <text evidence="1">Homodimer.</text>
</comment>
<comment type="subcellular location">
    <subcellularLocation>
        <location evidence="2">Cell membrane</location>
        <topology evidence="2">Lipid-anchor</topology>
    </subcellularLocation>
</comment>
<dbReference type="EMBL" id="AM946981">
    <property type="protein sequence ID" value="CAQ33498.1"/>
    <property type="molecule type" value="Genomic_DNA"/>
</dbReference>
<dbReference type="EMBL" id="CP001665">
    <property type="protein sequence ID" value="ACT27647.1"/>
    <property type="molecule type" value="Genomic_DNA"/>
</dbReference>
<dbReference type="EMBL" id="CP001509">
    <property type="protein sequence ID" value="ACT44834.1"/>
    <property type="molecule type" value="Genomic_DNA"/>
</dbReference>
<dbReference type="RefSeq" id="WP_000802080.1">
    <property type="nucleotide sequence ID" value="NZ_JADXDS010000017.1"/>
</dbReference>
<dbReference type="SMR" id="C6EH62"/>
<dbReference type="GeneID" id="93778820"/>
<dbReference type="KEGG" id="ebd:ECBD_0577"/>
<dbReference type="KEGG" id="ebe:B21_02981"/>
<dbReference type="KEGG" id="ebl:ECD_03030"/>
<dbReference type="PATRIC" id="fig|469008.15.peg.3069"/>
<dbReference type="eggNOG" id="COG4785">
    <property type="taxonomic scope" value="Bacteria"/>
</dbReference>
<dbReference type="HOGENOM" id="CLU_071600_0_0_6"/>
<dbReference type="GO" id="GO:0005886">
    <property type="term" value="C:plasma membrane"/>
    <property type="evidence" value="ECO:0007669"/>
    <property type="project" value="UniProtKB-SubCell"/>
</dbReference>
<dbReference type="GO" id="GO:0051301">
    <property type="term" value="P:cell division"/>
    <property type="evidence" value="ECO:0007669"/>
    <property type="project" value="UniProtKB-KW"/>
</dbReference>
<dbReference type="FunFam" id="1.25.40.10:FF:000021">
    <property type="entry name" value="Lipoprotein NlpI"/>
    <property type="match status" value="1"/>
</dbReference>
<dbReference type="Gene3D" id="1.25.40.10">
    <property type="entry name" value="Tetratricopeptide repeat domain"/>
    <property type="match status" value="1"/>
</dbReference>
<dbReference type="InterPro" id="IPR023605">
    <property type="entry name" value="Lipoprotein_NlpI"/>
</dbReference>
<dbReference type="InterPro" id="IPR011990">
    <property type="entry name" value="TPR-like_helical_dom_sf"/>
</dbReference>
<dbReference type="InterPro" id="IPR019734">
    <property type="entry name" value="TPR_rpt"/>
</dbReference>
<dbReference type="InterPro" id="IPR050498">
    <property type="entry name" value="Ycf3"/>
</dbReference>
<dbReference type="NCBIfam" id="NF008391">
    <property type="entry name" value="PRK11189.1"/>
    <property type="match status" value="1"/>
</dbReference>
<dbReference type="PANTHER" id="PTHR44858">
    <property type="entry name" value="TETRATRICOPEPTIDE REPEAT PROTEIN 6"/>
    <property type="match status" value="1"/>
</dbReference>
<dbReference type="PANTHER" id="PTHR44858:SF1">
    <property type="entry name" value="UDP-N-ACETYLGLUCOSAMINE--PEPTIDE N-ACETYLGLUCOSAMINYLTRANSFERASE SPINDLY-RELATED"/>
    <property type="match status" value="1"/>
</dbReference>
<dbReference type="Pfam" id="PF13432">
    <property type="entry name" value="TPR_16"/>
    <property type="match status" value="1"/>
</dbReference>
<dbReference type="PIRSF" id="PIRSF004654">
    <property type="entry name" value="NlpI"/>
    <property type="match status" value="1"/>
</dbReference>
<dbReference type="SMART" id="SM00028">
    <property type="entry name" value="TPR"/>
    <property type="match status" value="3"/>
</dbReference>
<dbReference type="SUPFAM" id="SSF48452">
    <property type="entry name" value="TPR-like"/>
    <property type="match status" value="1"/>
</dbReference>
<dbReference type="PROSITE" id="PS51257">
    <property type="entry name" value="PROKAR_LIPOPROTEIN"/>
    <property type="match status" value="1"/>
</dbReference>
<dbReference type="PROSITE" id="PS50005">
    <property type="entry name" value="TPR"/>
    <property type="match status" value="3"/>
</dbReference>
<dbReference type="PROSITE" id="PS50293">
    <property type="entry name" value="TPR_REGION"/>
    <property type="match status" value="2"/>
</dbReference>
<protein>
    <recommendedName>
        <fullName>Lipoprotein NlpI</fullName>
    </recommendedName>
</protein>